<proteinExistence type="inferred from homology"/>
<sequence>MKLPIYLDYSATTPVDPRVAEKMMQFLTLDGTFGNPASRSHRFGWQAEEAVDIARNQIAELVGADPREIVFTSGATESDNLAIKGAANFYQKKGKHIITSKTEHKAVLDTCRQLEREGFEVTYLAPQRNGIIDLNELEAAMRDDTILVSIMHVNNEIGVVQDIATIGEMCRARGIIYHVDATQSVGKLPIDLSQLKVDLMSFSGHKIYGPKGIGALYVRRKPRIRIEAQMHGGGHERGMRSGTLPVHQIVGMGEAYRIAKEEMETEMARLRGLRNRLWNGIKDIEEVYLNGDLEQGAPNILNVSFNYVEGESLIMALKDLAVSSGSACTSATLEPSYVLRALGMNDELAHSSIRFSLGRFTTEEEIDYTIDLVRKSIGRLRDLSPLWEMYKQGVDLNSIEWAHH</sequence>
<protein>
    <recommendedName>
        <fullName evidence="1">Cysteine desulfurase IscS</fullName>
        <ecNumber evidence="1">2.8.1.7</ecNumber>
    </recommendedName>
</protein>
<feature type="chain" id="PRO_0000150278" description="Cysteine desulfurase IscS">
    <location>
        <begin position="1"/>
        <end position="404"/>
    </location>
</feature>
<feature type="active site" description="Cysteine persulfide intermediate" evidence="1">
    <location>
        <position position="328"/>
    </location>
</feature>
<feature type="binding site" evidence="1">
    <location>
        <begin position="75"/>
        <end position="76"/>
    </location>
    <ligand>
        <name>pyridoxal 5'-phosphate</name>
        <dbReference type="ChEBI" id="CHEBI:597326"/>
    </ligand>
</feature>
<feature type="binding site" evidence="1">
    <location>
        <position position="155"/>
    </location>
    <ligand>
        <name>pyridoxal 5'-phosphate</name>
        <dbReference type="ChEBI" id="CHEBI:597326"/>
    </ligand>
</feature>
<feature type="binding site" evidence="1">
    <location>
        <position position="183"/>
    </location>
    <ligand>
        <name>pyridoxal 5'-phosphate</name>
        <dbReference type="ChEBI" id="CHEBI:597326"/>
    </ligand>
</feature>
<feature type="binding site" evidence="1">
    <location>
        <begin position="203"/>
        <end position="205"/>
    </location>
    <ligand>
        <name>pyridoxal 5'-phosphate</name>
        <dbReference type="ChEBI" id="CHEBI:597326"/>
    </ligand>
</feature>
<feature type="binding site" evidence="1">
    <location>
        <position position="243"/>
    </location>
    <ligand>
        <name>pyridoxal 5'-phosphate</name>
        <dbReference type="ChEBI" id="CHEBI:597326"/>
    </ligand>
</feature>
<feature type="binding site" description="via persulfide group" evidence="1">
    <location>
        <position position="328"/>
    </location>
    <ligand>
        <name>[2Fe-2S] cluster</name>
        <dbReference type="ChEBI" id="CHEBI:190135"/>
        <note>ligand shared with IscU</note>
    </ligand>
</feature>
<feature type="modified residue" description="N6-(pyridoxal phosphate)lysine" evidence="1">
    <location>
        <position position="206"/>
    </location>
</feature>
<gene>
    <name evidence="1" type="primary">iscS</name>
    <name type="ordered locus">STY2789</name>
    <name type="ordered locus">t0313</name>
</gene>
<dbReference type="EC" id="2.8.1.7" evidence="1"/>
<dbReference type="EMBL" id="AL513382">
    <property type="protein sequence ID" value="CAD02746.1"/>
    <property type="molecule type" value="Genomic_DNA"/>
</dbReference>
<dbReference type="EMBL" id="AE014613">
    <property type="protein sequence ID" value="AAO68037.1"/>
    <property type="molecule type" value="Genomic_DNA"/>
</dbReference>
<dbReference type="RefSeq" id="NP_457074.1">
    <property type="nucleotide sequence ID" value="NC_003198.1"/>
</dbReference>
<dbReference type="RefSeq" id="WP_000775265.1">
    <property type="nucleotide sequence ID" value="NZ_WSUR01000007.1"/>
</dbReference>
<dbReference type="SMR" id="Q8Z4N0"/>
<dbReference type="STRING" id="220341.gene:17586680"/>
<dbReference type="KEGG" id="stt:t0313"/>
<dbReference type="KEGG" id="sty:STY2789"/>
<dbReference type="PATRIC" id="fig|220341.7.peg.2834"/>
<dbReference type="eggNOG" id="COG1104">
    <property type="taxonomic scope" value="Bacteria"/>
</dbReference>
<dbReference type="HOGENOM" id="CLU_003433_0_2_6"/>
<dbReference type="OMA" id="KGLYWAR"/>
<dbReference type="OrthoDB" id="9808002at2"/>
<dbReference type="UniPathway" id="UPA00266"/>
<dbReference type="Proteomes" id="UP000000541">
    <property type="component" value="Chromosome"/>
</dbReference>
<dbReference type="Proteomes" id="UP000002670">
    <property type="component" value="Chromosome"/>
</dbReference>
<dbReference type="GO" id="GO:1990221">
    <property type="term" value="C:L-cysteine desulfurase complex"/>
    <property type="evidence" value="ECO:0007669"/>
    <property type="project" value="UniProtKB-ARBA"/>
</dbReference>
<dbReference type="GO" id="GO:0051537">
    <property type="term" value="F:2 iron, 2 sulfur cluster binding"/>
    <property type="evidence" value="ECO:0007669"/>
    <property type="project" value="UniProtKB-UniRule"/>
</dbReference>
<dbReference type="GO" id="GO:0031071">
    <property type="term" value="F:cysteine desulfurase activity"/>
    <property type="evidence" value="ECO:0007669"/>
    <property type="project" value="UniProtKB-UniRule"/>
</dbReference>
<dbReference type="GO" id="GO:0046872">
    <property type="term" value="F:metal ion binding"/>
    <property type="evidence" value="ECO:0007669"/>
    <property type="project" value="UniProtKB-KW"/>
</dbReference>
<dbReference type="GO" id="GO:0030170">
    <property type="term" value="F:pyridoxal phosphate binding"/>
    <property type="evidence" value="ECO:0007669"/>
    <property type="project" value="UniProtKB-UniRule"/>
</dbReference>
<dbReference type="GO" id="GO:0044571">
    <property type="term" value="P:[2Fe-2S] cluster assembly"/>
    <property type="evidence" value="ECO:0007669"/>
    <property type="project" value="UniProtKB-UniRule"/>
</dbReference>
<dbReference type="FunFam" id="3.40.640.10:FF:000003">
    <property type="entry name" value="Cysteine desulfurase IscS"/>
    <property type="match status" value="1"/>
</dbReference>
<dbReference type="FunFam" id="3.90.1150.10:FF:000002">
    <property type="entry name" value="Cysteine desulfurase IscS"/>
    <property type="match status" value="1"/>
</dbReference>
<dbReference type="Gene3D" id="3.90.1150.10">
    <property type="entry name" value="Aspartate Aminotransferase, domain 1"/>
    <property type="match status" value="1"/>
</dbReference>
<dbReference type="Gene3D" id="3.40.640.10">
    <property type="entry name" value="Type I PLP-dependent aspartate aminotransferase-like (Major domain)"/>
    <property type="match status" value="1"/>
</dbReference>
<dbReference type="HAMAP" id="MF_00331">
    <property type="entry name" value="Cys_desulf_IscS"/>
    <property type="match status" value="1"/>
</dbReference>
<dbReference type="InterPro" id="IPR000192">
    <property type="entry name" value="Aminotrans_V_dom"/>
</dbReference>
<dbReference type="InterPro" id="IPR020578">
    <property type="entry name" value="Aminotrans_V_PyrdxlP_BS"/>
</dbReference>
<dbReference type="InterPro" id="IPR010240">
    <property type="entry name" value="Cys_deSase_IscS"/>
</dbReference>
<dbReference type="InterPro" id="IPR016454">
    <property type="entry name" value="Cysteine_dSase"/>
</dbReference>
<dbReference type="InterPro" id="IPR015424">
    <property type="entry name" value="PyrdxlP-dep_Trfase"/>
</dbReference>
<dbReference type="InterPro" id="IPR015421">
    <property type="entry name" value="PyrdxlP-dep_Trfase_major"/>
</dbReference>
<dbReference type="InterPro" id="IPR015422">
    <property type="entry name" value="PyrdxlP-dep_Trfase_small"/>
</dbReference>
<dbReference type="NCBIfam" id="TIGR02006">
    <property type="entry name" value="IscS"/>
    <property type="match status" value="1"/>
</dbReference>
<dbReference type="NCBIfam" id="NF002806">
    <property type="entry name" value="PRK02948.1"/>
    <property type="match status" value="1"/>
</dbReference>
<dbReference type="NCBIfam" id="NF010611">
    <property type="entry name" value="PRK14012.1"/>
    <property type="match status" value="1"/>
</dbReference>
<dbReference type="PANTHER" id="PTHR11601:SF34">
    <property type="entry name" value="CYSTEINE DESULFURASE"/>
    <property type="match status" value="1"/>
</dbReference>
<dbReference type="PANTHER" id="PTHR11601">
    <property type="entry name" value="CYSTEINE DESULFURYLASE FAMILY MEMBER"/>
    <property type="match status" value="1"/>
</dbReference>
<dbReference type="Pfam" id="PF00266">
    <property type="entry name" value="Aminotran_5"/>
    <property type="match status" value="1"/>
</dbReference>
<dbReference type="PIRSF" id="PIRSF005572">
    <property type="entry name" value="NifS"/>
    <property type="match status" value="1"/>
</dbReference>
<dbReference type="SUPFAM" id="SSF53383">
    <property type="entry name" value="PLP-dependent transferases"/>
    <property type="match status" value="1"/>
</dbReference>
<dbReference type="PROSITE" id="PS00595">
    <property type="entry name" value="AA_TRANSFER_CLASS_5"/>
    <property type="match status" value="1"/>
</dbReference>
<name>ISCS_SALTI</name>
<comment type="function">
    <text evidence="1">Master enzyme that delivers sulfur to a number of partners involved in Fe-S cluster assembly, tRNA modification or cofactor biosynthesis. Catalyzes the removal of elemental sulfur and selenium atoms from cysteine and selenocysteine to produce alanine. Functions as a sulfur delivery protein for Fe-S cluster synthesis onto IscU, an Fe-S scaffold assembly protein, as well as other S acceptor proteins. Also functions as a selenium delivery protein in the pathway for the biosynthesis of selenophosphate.</text>
</comment>
<comment type="catalytic activity">
    <reaction evidence="1">
        <text>(sulfur carrier)-H + L-cysteine = (sulfur carrier)-SH + L-alanine</text>
        <dbReference type="Rhea" id="RHEA:43892"/>
        <dbReference type="Rhea" id="RHEA-COMP:14737"/>
        <dbReference type="Rhea" id="RHEA-COMP:14739"/>
        <dbReference type="ChEBI" id="CHEBI:29917"/>
        <dbReference type="ChEBI" id="CHEBI:35235"/>
        <dbReference type="ChEBI" id="CHEBI:57972"/>
        <dbReference type="ChEBI" id="CHEBI:64428"/>
        <dbReference type="EC" id="2.8.1.7"/>
    </reaction>
</comment>
<comment type="cofactor">
    <cofactor evidence="1">
        <name>pyridoxal 5'-phosphate</name>
        <dbReference type="ChEBI" id="CHEBI:597326"/>
    </cofactor>
</comment>
<comment type="pathway">
    <text evidence="1">Cofactor biosynthesis; iron-sulfur cluster biosynthesis.</text>
</comment>
<comment type="subunit">
    <text evidence="1">Homodimer. Forms a heterotetramer with IscU, interacts with other sulfur acceptors.</text>
</comment>
<comment type="subcellular location">
    <subcellularLocation>
        <location evidence="1">Cytoplasm</location>
    </subcellularLocation>
</comment>
<comment type="similarity">
    <text evidence="1">Belongs to the class-V pyridoxal-phosphate-dependent aminotransferase family. NifS/IscS subfamily.</text>
</comment>
<reference key="1">
    <citation type="journal article" date="2001" name="Nature">
        <title>Complete genome sequence of a multiple drug resistant Salmonella enterica serovar Typhi CT18.</title>
        <authorList>
            <person name="Parkhill J."/>
            <person name="Dougan G."/>
            <person name="James K.D."/>
            <person name="Thomson N.R."/>
            <person name="Pickard D."/>
            <person name="Wain J."/>
            <person name="Churcher C.M."/>
            <person name="Mungall K.L."/>
            <person name="Bentley S.D."/>
            <person name="Holden M.T.G."/>
            <person name="Sebaihia M."/>
            <person name="Baker S."/>
            <person name="Basham D."/>
            <person name="Brooks K."/>
            <person name="Chillingworth T."/>
            <person name="Connerton P."/>
            <person name="Cronin A."/>
            <person name="Davis P."/>
            <person name="Davies R.M."/>
            <person name="Dowd L."/>
            <person name="White N."/>
            <person name="Farrar J."/>
            <person name="Feltwell T."/>
            <person name="Hamlin N."/>
            <person name="Haque A."/>
            <person name="Hien T.T."/>
            <person name="Holroyd S."/>
            <person name="Jagels K."/>
            <person name="Krogh A."/>
            <person name="Larsen T.S."/>
            <person name="Leather S."/>
            <person name="Moule S."/>
            <person name="O'Gaora P."/>
            <person name="Parry C."/>
            <person name="Quail M.A."/>
            <person name="Rutherford K.M."/>
            <person name="Simmonds M."/>
            <person name="Skelton J."/>
            <person name="Stevens K."/>
            <person name="Whitehead S."/>
            <person name="Barrell B.G."/>
        </authorList>
    </citation>
    <scope>NUCLEOTIDE SEQUENCE [LARGE SCALE GENOMIC DNA]</scope>
    <source>
        <strain>CT18</strain>
    </source>
</reference>
<reference key="2">
    <citation type="journal article" date="2003" name="J. Bacteriol.">
        <title>Comparative genomics of Salmonella enterica serovar Typhi strains Ty2 and CT18.</title>
        <authorList>
            <person name="Deng W."/>
            <person name="Liou S.-R."/>
            <person name="Plunkett G. III"/>
            <person name="Mayhew G.F."/>
            <person name="Rose D.J."/>
            <person name="Burland V."/>
            <person name="Kodoyianni V."/>
            <person name="Schwartz D.C."/>
            <person name="Blattner F.R."/>
        </authorList>
    </citation>
    <scope>NUCLEOTIDE SEQUENCE [LARGE SCALE GENOMIC DNA]</scope>
    <source>
        <strain>ATCC 700931 / Ty2</strain>
    </source>
</reference>
<keyword id="KW-0001">2Fe-2S</keyword>
<keyword id="KW-0963">Cytoplasm</keyword>
<keyword id="KW-0408">Iron</keyword>
<keyword id="KW-0411">Iron-sulfur</keyword>
<keyword id="KW-0479">Metal-binding</keyword>
<keyword id="KW-0663">Pyridoxal phosphate</keyword>
<keyword id="KW-0808">Transferase</keyword>
<organism>
    <name type="scientific">Salmonella typhi</name>
    <dbReference type="NCBI Taxonomy" id="90370"/>
    <lineage>
        <taxon>Bacteria</taxon>
        <taxon>Pseudomonadati</taxon>
        <taxon>Pseudomonadota</taxon>
        <taxon>Gammaproteobacteria</taxon>
        <taxon>Enterobacterales</taxon>
        <taxon>Enterobacteriaceae</taxon>
        <taxon>Salmonella</taxon>
    </lineage>
</organism>
<accession>Q8Z4N0</accession>
<evidence type="ECO:0000255" key="1">
    <source>
        <dbReference type="HAMAP-Rule" id="MF_00331"/>
    </source>
</evidence>